<gene>
    <name type="primary">galT</name>
    <name type="ordered locus">BH1109</name>
</gene>
<accession>Q9KDV2</accession>
<accession>Q9RC74</accession>
<feature type="chain" id="PRO_0000169899" description="Galactose-1-phosphate uridylyltransferase">
    <location>
        <begin position="1"/>
        <end position="508"/>
    </location>
</feature>
<proteinExistence type="inferred from homology"/>
<evidence type="ECO:0000305" key="1"/>
<name>GALT_HALH5</name>
<organism>
    <name type="scientific">Halalkalibacterium halodurans (strain ATCC BAA-125 / DSM 18197 / FERM 7344 / JCM 9153 / C-125)</name>
    <name type="common">Bacillus halodurans</name>
    <dbReference type="NCBI Taxonomy" id="272558"/>
    <lineage>
        <taxon>Bacteria</taxon>
        <taxon>Bacillati</taxon>
        <taxon>Bacillota</taxon>
        <taxon>Bacilli</taxon>
        <taxon>Bacillales</taxon>
        <taxon>Bacillaceae</taxon>
        <taxon>Halalkalibacterium (ex Joshi et al. 2022)</taxon>
    </lineage>
</organism>
<comment type="catalytic activity">
    <reaction>
        <text>alpha-D-galactose 1-phosphate + UDP-alpha-D-glucose = alpha-D-glucose 1-phosphate + UDP-alpha-D-galactose</text>
        <dbReference type="Rhea" id="RHEA:13989"/>
        <dbReference type="ChEBI" id="CHEBI:58336"/>
        <dbReference type="ChEBI" id="CHEBI:58601"/>
        <dbReference type="ChEBI" id="CHEBI:58885"/>
        <dbReference type="ChEBI" id="CHEBI:66914"/>
        <dbReference type="EC" id="2.7.7.12"/>
    </reaction>
</comment>
<comment type="pathway">
    <text>Carbohydrate metabolism; galactose metabolism.</text>
</comment>
<comment type="subcellular location">
    <subcellularLocation>
        <location evidence="1">Cytoplasm</location>
    </subcellularLocation>
</comment>
<comment type="similarity">
    <text evidence="1">Belongs to the galactose-1-phosphate uridylyltransferase type 2 family.</text>
</comment>
<dbReference type="EC" id="2.7.7.12"/>
<dbReference type="EMBL" id="BA000004">
    <property type="protein sequence ID" value="BAB04828.1"/>
    <property type="molecule type" value="Genomic_DNA"/>
</dbReference>
<dbReference type="EMBL" id="AB024554">
    <property type="protein sequence ID" value="BAA83925.1"/>
    <property type="molecule type" value="Genomic_DNA"/>
</dbReference>
<dbReference type="PIR" id="E83788">
    <property type="entry name" value="E83788"/>
</dbReference>
<dbReference type="RefSeq" id="WP_010897279.1">
    <property type="nucleotide sequence ID" value="NC_002570.2"/>
</dbReference>
<dbReference type="STRING" id="272558.gene:10727003"/>
<dbReference type="KEGG" id="bha:BH1109"/>
<dbReference type="eggNOG" id="COG4468">
    <property type="taxonomic scope" value="Bacteria"/>
</dbReference>
<dbReference type="HOGENOM" id="CLU_047799_0_0_9"/>
<dbReference type="OrthoDB" id="2293at2"/>
<dbReference type="UniPathway" id="UPA00214"/>
<dbReference type="Proteomes" id="UP000001258">
    <property type="component" value="Chromosome"/>
</dbReference>
<dbReference type="GO" id="GO:0005737">
    <property type="term" value="C:cytoplasm"/>
    <property type="evidence" value="ECO:0007669"/>
    <property type="project" value="UniProtKB-SubCell"/>
</dbReference>
<dbReference type="GO" id="GO:0008108">
    <property type="term" value="F:UDP-glucose:hexose-1-phosphate uridylyltransferase activity"/>
    <property type="evidence" value="ECO:0007669"/>
    <property type="project" value="UniProtKB-UniRule"/>
</dbReference>
<dbReference type="GO" id="GO:0006012">
    <property type="term" value="P:galactose metabolic process"/>
    <property type="evidence" value="ECO:0007669"/>
    <property type="project" value="UniProtKB-UniRule"/>
</dbReference>
<dbReference type="HAMAP" id="MF_00571">
    <property type="entry name" value="GalP_UDP_trans"/>
    <property type="match status" value="1"/>
</dbReference>
<dbReference type="InterPro" id="IPR000766">
    <property type="entry name" value="GalP_uridyl_Trfase_II"/>
</dbReference>
<dbReference type="InterPro" id="IPR023425">
    <property type="entry name" value="GalP_uridyl_Trfase_II_CS"/>
</dbReference>
<dbReference type="InterPro" id="IPR005850">
    <property type="entry name" value="GalP_Utransf_C"/>
</dbReference>
<dbReference type="InterPro" id="IPR005849">
    <property type="entry name" value="GalP_Utransf_N"/>
</dbReference>
<dbReference type="NCBIfam" id="TIGR01239">
    <property type="entry name" value="galT_2"/>
    <property type="match status" value="1"/>
</dbReference>
<dbReference type="NCBIfam" id="NF003629">
    <property type="entry name" value="PRK05270.1-2"/>
    <property type="match status" value="1"/>
</dbReference>
<dbReference type="PANTHER" id="PTHR39191:SF1">
    <property type="entry name" value="DUF4922 DOMAIN-CONTAINING PROTEIN"/>
    <property type="match status" value="1"/>
</dbReference>
<dbReference type="PANTHER" id="PTHR39191">
    <property type="entry name" value="GALACTOSE-1-PHOSPHATE URIDYLYLTRANSFERASE"/>
    <property type="match status" value="1"/>
</dbReference>
<dbReference type="Pfam" id="PF02744">
    <property type="entry name" value="GalP_UDP_tr_C"/>
    <property type="match status" value="1"/>
</dbReference>
<dbReference type="Pfam" id="PF01087">
    <property type="entry name" value="GalP_UDP_transf"/>
    <property type="match status" value="1"/>
</dbReference>
<dbReference type="PIRSF" id="PIRSF006005">
    <property type="entry name" value="GalT_BS"/>
    <property type="match status" value="1"/>
</dbReference>
<dbReference type="PROSITE" id="PS01163">
    <property type="entry name" value="GAL_P_UDP_TRANSF_II"/>
    <property type="match status" value="1"/>
</dbReference>
<keyword id="KW-0119">Carbohydrate metabolism</keyword>
<keyword id="KW-0963">Cytoplasm</keyword>
<keyword id="KW-0299">Galactose metabolism</keyword>
<keyword id="KW-0548">Nucleotidyltransferase</keyword>
<keyword id="KW-1185">Reference proteome</keyword>
<keyword id="KW-0808">Transferase</keyword>
<reference key="1">
    <citation type="journal article" date="2000" name="Nucleic Acids Res.">
        <title>Complete genome sequence of the alkaliphilic bacterium Bacillus halodurans and genomic sequence comparison with Bacillus subtilis.</title>
        <authorList>
            <person name="Takami H."/>
            <person name="Nakasone K."/>
            <person name="Takaki Y."/>
            <person name="Maeno G."/>
            <person name="Sasaki R."/>
            <person name="Masui N."/>
            <person name="Fuji F."/>
            <person name="Hirama C."/>
            <person name="Nakamura Y."/>
            <person name="Ogasawara N."/>
            <person name="Kuhara S."/>
            <person name="Horikoshi K."/>
        </authorList>
    </citation>
    <scope>NUCLEOTIDE SEQUENCE [LARGE SCALE GENOMIC DNA]</scope>
    <source>
        <strain>ATCC BAA-125 / DSM 18197 / FERM 7344 / JCM 9153 / C-125</strain>
    </source>
</reference>
<reference key="2">
    <citation type="journal article" date="1999" name="Extremophiles">
        <title>Genetic analysis of the chromosome of alkaliphilic Bacillus halodurans C-125.</title>
        <authorList>
            <person name="Takami H."/>
            <person name="Takaki Y."/>
            <person name="Nakasone K."/>
            <person name="Sakiyama T."/>
            <person name="Maeno G."/>
            <person name="Sasaki R."/>
            <person name="Hirama C."/>
            <person name="Fuji F."/>
            <person name="Masui N."/>
        </authorList>
    </citation>
    <scope>NUCLEOTIDE SEQUENCE [GENOMIC DNA] OF 1-450</scope>
    <source>
        <strain>ATCC BAA-125 / DSM 18197 / FERM 7344 / JCM 9153 / C-125</strain>
    </source>
</reference>
<protein>
    <recommendedName>
        <fullName>Galactose-1-phosphate uridylyltransferase</fullName>
        <shortName>Gal-1-P uridylyltransferase</shortName>
        <ecNumber>2.7.7.12</ecNumber>
    </recommendedName>
    <alternativeName>
        <fullName>UDP-glucose--hexose-1-phosphate uridylyltransferase</fullName>
    </alternativeName>
</protein>
<sequence>MSQSSIAIQIEALLTYALQHGLITKWDIDASRNRVLDVLDLDELEPVEQVDVECEMPYPILENILDWAAENGRLEANTVTYRDLLDTKLMGALLGQPSETIRTFYERYEQQGPEEATKVFYDFSKQVHYIRTDRIAKNEHWFSETPYGQLEITINLSKPEKDPKAIAQAKHLQASSYPKCLLCKENVGYRGRVNHPARQNLRVIPVELNQEQWYMQFSPYVYYNEHAIVFSGEHVPMKISTETFARLLEFTEKFPHYFIGSNADLPIVGGSILSHDHFQGGNHAFPMAKASMEKTFSISRFPSVIAGIVKWPMSVVRLQGMDRSELVKAADHVYHAWQAYGDEAADIYPFTGDTPHNTITPIARRRGELFELDLVLRNNRTSKEHPDGIFHPHQEVHHIKKENIGLIEVMGLAVLPGRLKEELELLAEALLSSDPRQVIARYEQIQKHEAWALAIKERHAHLHDSNVMDILRDEIGKVFATILAHAGVFKRTGEGAAAFDRFISTLNQ</sequence>